<sequence>MQYKTKAKKSLGQNFLQDENIIRKIVQLANIKKHDIVVEIGPGLGALTRYLLSSSNNVSVVEFDASVIDTLIANCQKYGTPHIYNQDFLKFDISSLENSSNQKIKLIGNLPYNISSPILFKVIKDSDKIVDAHFMLQKEVVERIVSLPNSKSYGRLSVILQYHFDCSMILKIPPEVFYPQPKVDSAILRLKPKNSKELLKNYNFFEEIVKQSFAQRRKTLHNNLKSILKERKIDPSTLPVDTNLRAENLSVGDFVSLANFLS</sequence>
<organism>
    <name type="scientific">Francisella tularensis subsp. tularensis (strain WY96-3418)</name>
    <dbReference type="NCBI Taxonomy" id="418136"/>
    <lineage>
        <taxon>Bacteria</taxon>
        <taxon>Pseudomonadati</taxon>
        <taxon>Pseudomonadota</taxon>
        <taxon>Gammaproteobacteria</taxon>
        <taxon>Thiotrichales</taxon>
        <taxon>Francisellaceae</taxon>
        <taxon>Francisella</taxon>
    </lineage>
</organism>
<gene>
    <name evidence="1" type="primary">rsmA</name>
    <name evidence="1" type="synonym">ksgA</name>
    <name type="ordered locus">FTW_1601</name>
</gene>
<evidence type="ECO:0000255" key="1">
    <source>
        <dbReference type="HAMAP-Rule" id="MF_00607"/>
    </source>
</evidence>
<feature type="chain" id="PRO_1000056621" description="Ribosomal RNA small subunit methyltransferase A">
    <location>
        <begin position="1"/>
        <end position="262"/>
    </location>
</feature>
<feature type="binding site" evidence="1">
    <location>
        <position position="14"/>
    </location>
    <ligand>
        <name>S-adenosyl-L-methionine</name>
        <dbReference type="ChEBI" id="CHEBI:59789"/>
    </ligand>
</feature>
<feature type="binding site" evidence="1">
    <location>
        <position position="16"/>
    </location>
    <ligand>
        <name>S-adenosyl-L-methionine</name>
        <dbReference type="ChEBI" id="CHEBI:59789"/>
    </ligand>
</feature>
<feature type="binding site" evidence="1">
    <location>
        <position position="41"/>
    </location>
    <ligand>
        <name>S-adenosyl-L-methionine</name>
        <dbReference type="ChEBI" id="CHEBI:59789"/>
    </ligand>
</feature>
<feature type="binding site" evidence="1">
    <location>
        <position position="62"/>
    </location>
    <ligand>
        <name>S-adenosyl-L-methionine</name>
        <dbReference type="ChEBI" id="CHEBI:59789"/>
    </ligand>
</feature>
<feature type="binding site" evidence="1">
    <location>
        <position position="87"/>
    </location>
    <ligand>
        <name>S-adenosyl-L-methionine</name>
        <dbReference type="ChEBI" id="CHEBI:59789"/>
    </ligand>
</feature>
<feature type="binding site" evidence="1">
    <location>
        <position position="109"/>
    </location>
    <ligand>
        <name>S-adenosyl-L-methionine</name>
        <dbReference type="ChEBI" id="CHEBI:59789"/>
    </ligand>
</feature>
<comment type="function">
    <text evidence="1">Specifically dimethylates two adjacent adenosines (A1518 and A1519) in the loop of a conserved hairpin near the 3'-end of 16S rRNA in the 30S particle. May play a critical role in biogenesis of 30S subunits.</text>
</comment>
<comment type="catalytic activity">
    <reaction evidence="1">
        <text>adenosine(1518)/adenosine(1519) in 16S rRNA + 4 S-adenosyl-L-methionine = N(6)-dimethyladenosine(1518)/N(6)-dimethyladenosine(1519) in 16S rRNA + 4 S-adenosyl-L-homocysteine + 4 H(+)</text>
        <dbReference type="Rhea" id="RHEA:19609"/>
        <dbReference type="Rhea" id="RHEA-COMP:10232"/>
        <dbReference type="Rhea" id="RHEA-COMP:10233"/>
        <dbReference type="ChEBI" id="CHEBI:15378"/>
        <dbReference type="ChEBI" id="CHEBI:57856"/>
        <dbReference type="ChEBI" id="CHEBI:59789"/>
        <dbReference type="ChEBI" id="CHEBI:74411"/>
        <dbReference type="ChEBI" id="CHEBI:74493"/>
        <dbReference type="EC" id="2.1.1.182"/>
    </reaction>
</comment>
<comment type="subcellular location">
    <subcellularLocation>
        <location evidence="1">Cytoplasm</location>
    </subcellularLocation>
</comment>
<comment type="similarity">
    <text evidence="1">Belongs to the class I-like SAM-binding methyltransferase superfamily. rRNA adenine N(6)-methyltransferase family. RsmA subfamily.</text>
</comment>
<accession>A4IZF1</accession>
<proteinExistence type="inferred from homology"/>
<keyword id="KW-0963">Cytoplasm</keyword>
<keyword id="KW-0489">Methyltransferase</keyword>
<keyword id="KW-0694">RNA-binding</keyword>
<keyword id="KW-0698">rRNA processing</keyword>
<keyword id="KW-0949">S-adenosyl-L-methionine</keyword>
<keyword id="KW-0808">Transferase</keyword>
<reference key="1">
    <citation type="journal article" date="2007" name="PLoS ONE">
        <title>Complete genomic characterization of a pathogenic A.II strain of Francisella tularensis subspecies tularensis.</title>
        <authorList>
            <person name="Beckstrom-Sternberg S.M."/>
            <person name="Auerbach R.K."/>
            <person name="Godbole S."/>
            <person name="Pearson J.V."/>
            <person name="Beckstrom-Sternberg J.S."/>
            <person name="Deng Z."/>
            <person name="Munk C."/>
            <person name="Kubota K."/>
            <person name="Zhou Y."/>
            <person name="Bruce D."/>
            <person name="Noronha J."/>
            <person name="Scheuermann R.H."/>
            <person name="Wang A."/>
            <person name="Wei X."/>
            <person name="Wang J."/>
            <person name="Hao J."/>
            <person name="Wagner D.M."/>
            <person name="Brettin T.S."/>
            <person name="Brown N."/>
            <person name="Gilna P."/>
            <person name="Keim P.S."/>
        </authorList>
    </citation>
    <scope>NUCLEOTIDE SEQUENCE [LARGE SCALE GENOMIC DNA]</scope>
    <source>
        <strain>WY96-3418</strain>
    </source>
</reference>
<name>RSMA_FRATW</name>
<protein>
    <recommendedName>
        <fullName evidence="1">Ribosomal RNA small subunit methyltransferase A</fullName>
        <ecNumber evidence="1">2.1.1.182</ecNumber>
    </recommendedName>
    <alternativeName>
        <fullName evidence="1">16S rRNA (adenine(1518)-N(6)/adenine(1519)-N(6))-dimethyltransferase</fullName>
    </alternativeName>
    <alternativeName>
        <fullName evidence="1">16S rRNA dimethyladenosine transferase</fullName>
    </alternativeName>
    <alternativeName>
        <fullName evidence="1">16S rRNA dimethylase</fullName>
    </alternativeName>
    <alternativeName>
        <fullName evidence="1">S-adenosylmethionine-6-N', N'-adenosyl(rRNA) dimethyltransferase</fullName>
    </alternativeName>
</protein>
<dbReference type="EC" id="2.1.1.182" evidence="1"/>
<dbReference type="EMBL" id="CP000608">
    <property type="protein sequence ID" value="ABO47301.1"/>
    <property type="molecule type" value="Genomic_DNA"/>
</dbReference>
<dbReference type="RefSeq" id="WP_003016977.1">
    <property type="nucleotide sequence ID" value="NC_009257.1"/>
</dbReference>
<dbReference type="SMR" id="A4IZF1"/>
<dbReference type="KEGG" id="ftw:FTW_1601"/>
<dbReference type="HOGENOM" id="CLU_041220_0_1_6"/>
<dbReference type="GO" id="GO:0005829">
    <property type="term" value="C:cytosol"/>
    <property type="evidence" value="ECO:0007669"/>
    <property type="project" value="TreeGrafter"/>
</dbReference>
<dbReference type="GO" id="GO:0052908">
    <property type="term" value="F:16S rRNA (adenine(1518)-N(6)/adenine(1519)-N(6))-dimethyltransferase activity"/>
    <property type="evidence" value="ECO:0007669"/>
    <property type="project" value="UniProtKB-EC"/>
</dbReference>
<dbReference type="GO" id="GO:0003723">
    <property type="term" value="F:RNA binding"/>
    <property type="evidence" value="ECO:0007669"/>
    <property type="project" value="UniProtKB-KW"/>
</dbReference>
<dbReference type="FunFam" id="1.10.8.100:FF:000001">
    <property type="entry name" value="Ribosomal RNA small subunit methyltransferase A"/>
    <property type="match status" value="1"/>
</dbReference>
<dbReference type="FunFam" id="3.40.50.150:FF:000023">
    <property type="entry name" value="Ribosomal RNA small subunit methyltransferase A"/>
    <property type="match status" value="1"/>
</dbReference>
<dbReference type="Gene3D" id="1.10.8.100">
    <property type="entry name" value="Ribosomal RNA adenine dimethylase-like, domain 2"/>
    <property type="match status" value="1"/>
</dbReference>
<dbReference type="Gene3D" id="3.40.50.150">
    <property type="entry name" value="Vaccinia Virus protein VP39"/>
    <property type="match status" value="1"/>
</dbReference>
<dbReference type="HAMAP" id="MF_00607">
    <property type="entry name" value="16SrRNA_methyltr_A"/>
    <property type="match status" value="1"/>
</dbReference>
<dbReference type="InterPro" id="IPR001737">
    <property type="entry name" value="KsgA/Erm"/>
</dbReference>
<dbReference type="InterPro" id="IPR023165">
    <property type="entry name" value="rRNA_Ade_diMease-like_C"/>
</dbReference>
<dbReference type="InterPro" id="IPR020596">
    <property type="entry name" value="rRNA_Ade_Mease_Trfase_CS"/>
</dbReference>
<dbReference type="InterPro" id="IPR020598">
    <property type="entry name" value="rRNA_Ade_methylase_Trfase_N"/>
</dbReference>
<dbReference type="InterPro" id="IPR011530">
    <property type="entry name" value="rRNA_adenine_dimethylase"/>
</dbReference>
<dbReference type="InterPro" id="IPR029063">
    <property type="entry name" value="SAM-dependent_MTases_sf"/>
</dbReference>
<dbReference type="NCBIfam" id="TIGR00755">
    <property type="entry name" value="ksgA"/>
    <property type="match status" value="1"/>
</dbReference>
<dbReference type="PANTHER" id="PTHR11727">
    <property type="entry name" value="DIMETHYLADENOSINE TRANSFERASE"/>
    <property type="match status" value="1"/>
</dbReference>
<dbReference type="PANTHER" id="PTHR11727:SF7">
    <property type="entry name" value="DIMETHYLADENOSINE TRANSFERASE-RELATED"/>
    <property type="match status" value="1"/>
</dbReference>
<dbReference type="Pfam" id="PF00398">
    <property type="entry name" value="RrnaAD"/>
    <property type="match status" value="1"/>
</dbReference>
<dbReference type="SMART" id="SM00650">
    <property type="entry name" value="rADc"/>
    <property type="match status" value="1"/>
</dbReference>
<dbReference type="SUPFAM" id="SSF53335">
    <property type="entry name" value="S-adenosyl-L-methionine-dependent methyltransferases"/>
    <property type="match status" value="1"/>
</dbReference>
<dbReference type="PROSITE" id="PS01131">
    <property type="entry name" value="RRNA_A_DIMETH"/>
    <property type="match status" value="1"/>
</dbReference>
<dbReference type="PROSITE" id="PS51689">
    <property type="entry name" value="SAM_RNA_A_N6_MT"/>
    <property type="match status" value="1"/>
</dbReference>